<feature type="signal peptide" evidence="2">
    <location>
        <begin position="1"/>
        <end position="19"/>
    </location>
</feature>
<feature type="chain" id="PRO_0000032496" description="Heparin cofactor 2">
    <location>
        <begin position="20"/>
        <end position="480"/>
    </location>
</feature>
<feature type="repeat" description="1">
    <location>
        <begin position="56"/>
        <end position="66"/>
    </location>
</feature>
<feature type="repeat" description="2">
    <location>
        <begin position="70"/>
        <end position="80"/>
    </location>
</feature>
<feature type="region of interest" description="2 X 11 AA approximate repeats, Asp/Glu-rich (acidic) (hirudin-like)">
    <location>
        <begin position="56"/>
        <end position="80"/>
    </location>
</feature>
<feature type="region of interest" description="Glycosaminoglycan-binding site" evidence="1">
    <location>
        <begin position="173"/>
        <end position="193"/>
    </location>
</feature>
<feature type="site" description="Reactive bond" evidence="1">
    <location>
        <begin position="444"/>
        <end position="445"/>
    </location>
</feature>
<feature type="modified residue" description="Sulfotyrosine" evidence="1">
    <location>
        <position position="62"/>
    </location>
</feature>
<feature type="modified residue" description="Sulfotyrosine" evidence="1">
    <location>
        <position position="75"/>
    </location>
</feature>
<feature type="glycosylation site" description="N-linked (GlcNAc...) asparagine" evidence="2">
    <location>
        <position position="32"/>
    </location>
</feature>
<feature type="glycosylation site" description="N-linked (GlcNAc...) asparagine" evidence="2">
    <location>
        <position position="169"/>
    </location>
</feature>
<feature type="glycosylation site" description="N-linked (GlcNAc...) asparagine" evidence="2">
    <location>
        <position position="368"/>
    </location>
</feature>
<feature type="glycosylation site" description="N-linked (GlcNAc...) asparagine" evidence="2">
    <location>
        <position position="404"/>
    </location>
</feature>
<evidence type="ECO:0000250" key="1"/>
<evidence type="ECO:0000255" key="2"/>
<evidence type="ECO:0000305" key="3"/>
<sequence>MQHRPHLLLISLTIMSVCGGSNGLTDQLNNKNLTMPLLPIEFHKENTVTNDWIPEGEEDDDYLDLEKLLSEDDDYIDIIDAVSPTDSEASAGNILQLFQGKSRIQRLNILNAKFAFSLYRALKDQANAFDNIFIAPVGISTAMGMISLGLKGETHEQVHSVLHFRDFVNASSKYEILTIHNLFRKLTHRLFRRNFGYTLRSVNDLYVQKQFPIREDFKAKVREYYFAEAQAADFSDPAFISKANNHILKVTKGLIKEALENVDPATQMMILNCIYFKGTWVNKFPVEMTHNHNFRLNEREVVKVSMMQTKGNFLAANDQELACDVLQLEYVGGISMLIVVPHKLSGMKTLEAQLTPQVVERWQKSMTNRTREVLLPKFKLEKNYNLVEALKSMGVTELFDKNGNMSGISDQGITMDLFKHQGTITVNEEGTQAAAVTTVGFMPLSTQVRFTVDRPFLFLVYEHRTSCLLFMGKVANPVRS</sequence>
<proteinExistence type="evidence at transcript level"/>
<keyword id="KW-0094">Blood coagulation</keyword>
<keyword id="KW-0325">Glycoprotein</keyword>
<keyword id="KW-0356">Hemostasis</keyword>
<keyword id="KW-0358">Heparin-binding</keyword>
<keyword id="KW-0646">Protease inhibitor</keyword>
<keyword id="KW-1185">Reference proteome</keyword>
<keyword id="KW-0677">Repeat</keyword>
<keyword id="KW-0722">Serine protease inhibitor</keyword>
<keyword id="KW-0732">Signal</keyword>
<keyword id="KW-0765">Sulfation</keyword>
<reference key="1">
    <citation type="journal article" date="1994" name="Thromb. Haemost.">
        <title>Molecular cloning and expression of rabbit heparin cofactor II: a plasma thrombin inhibitor highly conserved between species.</title>
        <authorList>
            <person name="Sheffield W.P."/>
            <person name="Schuyler P.D."/>
            <person name="Blajchman M.A."/>
        </authorList>
    </citation>
    <scope>NUCLEOTIDE SEQUENCE [MRNA]</scope>
    <source>
        <tissue>Liver</tissue>
    </source>
</reference>
<organism>
    <name type="scientific">Oryctolagus cuniculus</name>
    <name type="common">Rabbit</name>
    <dbReference type="NCBI Taxonomy" id="9986"/>
    <lineage>
        <taxon>Eukaryota</taxon>
        <taxon>Metazoa</taxon>
        <taxon>Chordata</taxon>
        <taxon>Craniata</taxon>
        <taxon>Vertebrata</taxon>
        <taxon>Euteleostomi</taxon>
        <taxon>Mammalia</taxon>
        <taxon>Eutheria</taxon>
        <taxon>Euarchontoglires</taxon>
        <taxon>Glires</taxon>
        <taxon>Lagomorpha</taxon>
        <taxon>Leporidae</taxon>
        <taxon>Oryctolagus</taxon>
    </lineage>
</organism>
<accession>P47776</accession>
<gene>
    <name type="primary">SERPIND1</name>
    <name type="synonym">HCF2</name>
</gene>
<protein>
    <recommendedName>
        <fullName>Heparin cofactor 2</fullName>
    </recommendedName>
    <alternativeName>
        <fullName>Heparin cofactor II</fullName>
        <shortName>HC-II</shortName>
    </alternativeName>
    <alternativeName>
        <fullName>Protease inhibitor leuserpin-2</fullName>
    </alternativeName>
    <alternativeName>
        <fullName>Serpin D1</fullName>
    </alternativeName>
</protein>
<comment type="function">
    <text>Thrombin inhibitor activated by the glycosaminoglycans, heparin or dermatan sulfate. In the presence of the latter, HC-II becomes the predominant thrombin inhibitor in place of antithrombin III (AT).</text>
</comment>
<comment type="domain">
    <text evidence="1">The N-terminal acidic repeat region mediates, in part, the glycosaminoglycan-accelerated thrombin inhibition.</text>
</comment>
<comment type="PTM">
    <text>N-glycosylated; different glycan composition appears to lead to two forms of this protein (56 and 60 kDa).</text>
</comment>
<comment type="similarity">
    <text evidence="3">Belongs to the serpin family.</text>
</comment>
<name>HEP2_RABIT</name>
<dbReference type="EMBL" id="S73493">
    <property type="protein sequence ID" value="AAB32401.1"/>
    <property type="molecule type" value="mRNA"/>
</dbReference>
<dbReference type="PIR" id="I46990">
    <property type="entry name" value="I46990"/>
</dbReference>
<dbReference type="RefSeq" id="NP_001075798.1">
    <property type="nucleotide sequence ID" value="NM_001082329.1"/>
</dbReference>
<dbReference type="SMR" id="P47776"/>
<dbReference type="FunCoup" id="P47776">
    <property type="interactions" value="284"/>
</dbReference>
<dbReference type="STRING" id="9986.ENSOCUP00000007813"/>
<dbReference type="MEROPS" id="I04.019"/>
<dbReference type="GlyCosmos" id="P47776">
    <property type="glycosylation" value="4 sites, No reported glycans"/>
</dbReference>
<dbReference type="PaxDb" id="9986-ENSOCUP00000007813"/>
<dbReference type="GeneID" id="100009170"/>
<dbReference type="KEGG" id="ocu:100009170"/>
<dbReference type="CTD" id="3053"/>
<dbReference type="eggNOG" id="KOG2392">
    <property type="taxonomic scope" value="Eukaryota"/>
</dbReference>
<dbReference type="InParanoid" id="P47776"/>
<dbReference type="OrthoDB" id="1063785at2759"/>
<dbReference type="Proteomes" id="UP000001811">
    <property type="component" value="Unplaced"/>
</dbReference>
<dbReference type="GO" id="GO:0005615">
    <property type="term" value="C:extracellular space"/>
    <property type="evidence" value="ECO:0007669"/>
    <property type="project" value="InterPro"/>
</dbReference>
<dbReference type="GO" id="GO:0008201">
    <property type="term" value="F:heparin binding"/>
    <property type="evidence" value="ECO:0007669"/>
    <property type="project" value="UniProtKB-KW"/>
</dbReference>
<dbReference type="GO" id="GO:0004867">
    <property type="term" value="F:serine-type endopeptidase inhibitor activity"/>
    <property type="evidence" value="ECO:0007669"/>
    <property type="project" value="UniProtKB-KW"/>
</dbReference>
<dbReference type="GO" id="GO:0007596">
    <property type="term" value="P:blood coagulation"/>
    <property type="evidence" value="ECO:0007669"/>
    <property type="project" value="UniProtKB-KW"/>
</dbReference>
<dbReference type="CDD" id="cd02047">
    <property type="entry name" value="serpinD1_HCF2"/>
    <property type="match status" value="1"/>
</dbReference>
<dbReference type="FunFam" id="2.30.39.10:FF:000002">
    <property type="entry name" value="Serpin family D member 1"/>
    <property type="match status" value="1"/>
</dbReference>
<dbReference type="Gene3D" id="2.30.39.10">
    <property type="entry name" value="Alpha-1-antitrypsin, domain 1"/>
    <property type="match status" value="1"/>
</dbReference>
<dbReference type="Gene3D" id="3.30.497.10">
    <property type="entry name" value="Antithrombin, subunit I, domain 2"/>
    <property type="match status" value="1"/>
</dbReference>
<dbReference type="InterPro" id="IPR033831">
    <property type="entry name" value="HCII_serpin_dom"/>
</dbReference>
<dbReference type="InterPro" id="IPR023795">
    <property type="entry name" value="Serpin_CS"/>
</dbReference>
<dbReference type="InterPro" id="IPR023796">
    <property type="entry name" value="Serpin_dom"/>
</dbReference>
<dbReference type="InterPro" id="IPR000215">
    <property type="entry name" value="Serpin_fam"/>
</dbReference>
<dbReference type="InterPro" id="IPR036186">
    <property type="entry name" value="Serpin_sf"/>
</dbReference>
<dbReference type="InterPro" id="IPR042178">
    <property type="entry name" value="Serpin_sf_1"/>
</dbReference>
<dbReference type="InterPro" id="IPR042185">
    <property type="entry name" value="Serpin_sf_2"/>
</dbReference>
<dbReference type="PANTHER" id="PTHR11461:SF30">
    <property type="entry name" value="HEPARIN COFACTOR 2"/>
    <property type="match status" value="1"/>
</dbReference>
<dbReference type="PANTHER" id="PTHR11461">
    <property type="entry name" value="SERINE PROTEASE INHIBITOR, SERPIN"/>
    <property type="match status" value="1"/>
</dbReference>
<dbReference type="Pfam" id="PF00079">
    <property type="entry name" value="Serpin"/>
    <property type="match status" value="1"/>
</dbReference>
<dbReference type="PRINTS" id="PR00780">
    <property type="entry name" value="LEUSERPINII"/>
</dbReference>
<dbReference type="SMART" id="SM00093">
    <property type="entry name" value="SERPIN"/>
    <property type="match status" value="1"/>
</dbReference>
<dbReference type="SUPFAM" id="SSF56574">
    <property type="entry name" value="Serpins"/>
    <property type="match status" value="1"/>
</dbReference>
<dbReference type="PROSITE" id="PS00284">
    <property type="entry name" value="SERPIN"/>
    <property type="match status" value="1"/>
</dbReference>